<evidence type="ECO:0000250" key="1"/>
<evidence type="ECO:0000250" key="2">
    <source>
        <dbReference type="UniProtKB" id="P42208"/>
    </source>
</evidence>
<evidence type="ECO:0000250" key="3">
    <source>
        <dbReference type="UniProtKB" id="Q15019"/>
    </source>
</evidence>
<evidence type="ECO:0000255" key="4">
    <source>
        <dbReference type="PROSITE-ProRule" id="PRU01056"/>
    </source>
</evidence>
<gene>
    <name evidence="3" type="primary">SEPTIN2</name>
    <name type="synonym">SEPT2</name>
</gene>
<comment type="function">
    <text evidence="1 3">Filament-forming cytoskeletal GTPase. Forms a filamentous structure with SEPTIN12, SEPTIN6, SEPTIN2 and probably SEPTIN4 at the sperm annulus which is required for the structural integrity and motility of the sperm tail during postmeiotic differentiation (By similarity). Required for normal organization of the actin cytoskeleton. Plays a role in the biogenesis of polarized columnar-shaped epithelium by maintaining polyglutamylated microtubules, thus facilitating efficient vesicle transport, and by impeding MAP4 binding to tubulin. Required for the progression through mitosis. Forms a scaffold at the midplane of the mitotic splindle required to maintain CENPE localization at kinetochores and consequently chromosome congression. During anaphase, may be required for chromosome segregation and spindle elongation. Plays a role in ciliogenesis and collective cell movements. In cilia, required for the integrity of the diffusion barrier at the base of the primary cilium that prevents diffusion of transmembrane proteins between the cilia and plasma membranes: probably acts by regulating the assembly of the tectonic-like complex (also named B9 complex) by localizing TMEM231 protein (By similarity).</text>
</comment>
<comment type="subunit">
    <text evidence="2 3">Septins polymerize into heterooligomeric protein complexes that form filaments, and associate with cellular membranes, actin filaments and microtubules. GTPase activity is required for filament formation. Filaments are assembled from asymmetrical heterotrimers, composed of SEPTIN2, SEPTIN6 and SEPTIN7 that associate head-to-head to form a hexameric unit (By similarity). Interaction between SEPTIN2 and SEPTIN7 seems indirect. Interacts with SEPTIN5 (By similarity). Interaction with SEPTIN4 not detected (By similarity). Interacts with SEPTIN9. Component of a septin core octameric complex consisting of SEPTIN12, SEPTIN7, SEPTIN6 and SEPTIN2 or SEPTIN4 in the order 12-7-6-2-2-6-7-12 or 12-7-6-4-4-6-7-12 and located in the sperm annulus. Interacts with MAP4. Interacts with DZIP1L (By similarity).</text>
</comment>
<comment type="subcellular location">
    <subcellularLocation>
        <location evidence="1">Cytoplasm</location>
    </subcellularLocation>
    <subcellularLocation>
        <location evidence="1">Cytoplasm</location>
        <location evidence="1">Cytoskeleton</location>
    </subcellularLocation>
    <subcellularLocation>
        <location evidence="1">Cytoplasm</location>
        <location evidence="1">Cytoskeleton</location>
        <location evidence="1">Spindle</location>
    </subcellularLocation>
    <subcellularLocation>
        <location evidence="1">Chromosome</location>
        <location evidence="1">Centromere</location>
        <location evidence="1">Kinetochore</location>
    </subcellularLocation>
    <subcellularLocation>
        <location evidence="1">Cleavage furrow</location>
    </subcellularLocation>
    <subcellularLocation>
        <location evidence="1">Midbody</location>
    </subcellularLocation>
    <subcellularLocation>
        <location evidence="1">Cytoplasm</location>
        <location evidence="1">Cell cortex</location>
    </subcellularLocation>
    <subcellularLocation>
        <location evidence="1">Cell projection</location>
        <location evidence="1">Cilium membrane</location>
    </subcellularLocation>
    <subcellularLocation>
        <location evidence="3">Cell projection</location>
        <location evidence="3">Cilium</location>
        <location evidence="3">Flagellum</location>
    </subcellularLocation>
    <text evidence="1 3">Accumulates near the contractile ring from anaphase through telophase, and finally condenses into the midbody. In interphase and postmitotic cells, localized to fibrous or granular structures, depending on the growth state of the cell. Localizes at the base of the cilia near the morphological distinction between the cilia and plasma membranes. Found in the sperm annulus (By similarity).</text>
</comment>
<comment type="similarity">
    <text evidence="4">Belongs to the TRAFAC class TrmE-Era-EngA-EngB-Septin-like GTPase superfamily. Septin GTPase family.</text>
</comment>
<feature type="chain" id="PRO_0000270220" description="Septin-2">
    <location>
        <begin position="1"/>
        <end position="361"/>
    </location>
</feature>
<feature type="domain" description="Septin-type G" evidence="4">
    <location>
        <begin position="34"/>
        <end position="306"/>
    </location>
</feature>
<feature type="region of interest" description="G1 motif" evidence="4">
    <location>
        <begin position="44"/>
        <end position="51"/>
    </location>
</feature>
<feature type="region of interest" description="G3 motif" evidence="4">
    <location>
        <begin position="101"/>
        <end position="104"/>
    </location>
</feature>
<feature type="region of interest" description="G4 motif" evidence="4">
    <location>
        <begin position="182"/>
        <end position="185"/>
    </location>
</feature>
<feature type="region of interest" description="Important for dimerization" evidence="1">
    <location>
        <begin position="260"/>
        <end position="270"/>
    </location>
</feature>
<feature type="binding site" evidence="1">
    <location>
        <begin position="44"/>
        <end position="51"/>
    </location>
    <ligand>
        <name>GTP</name>
        <dbReference type="ChEBI" id="CHEBI:37565"/>
    </ligand>
</feature>
<feature type="binding site" evidence="1">
    <location>
        <position position="78"/>
    </location>
    <ligand>
        <name>GTP</name>
        <dbReference type="ChEBI" id="CHEBI:37565"/>
    </ligand>
</feature>
<feature type="binding site" evidence="1">
    <location>
        <position position="104"/>
    </location>
    <ligand>
        <name>GTP</name>
        <dbReference type="ChEBI" id="CHEBI:37565"/>
    </ligand>
</feature>
<feature type="binding site" evidence="1">
    <location>
        <begin position="183"/>
        <end position="191"/>
    </location>
    <ligand>
        <name>GTP</name>
        <dbReference type="ChEBI" id="CHEBI:37565"/>
    </ligand>
</feature>
<feature type="binding site" evidence="1">
    <location>
        <position position="241"/>
    </location>
    <ligand>
        <name>GTP</name>
        <dbReference type="ChEBI" id="CHEBI:37565"/>
    </ligand>
</feature>
<feature type="binding site" evidence="1">
    <location>
        <position position="256"/>
    </location>
    <ligand>
        <name>GTP</name>
        <dbReference type="ChEBI" id="CHEBI:37565"/>
    </ligand>
</feature>
<feature type="site" description="Important for dimerization" evidence="1">
    <location>
        <position position="156"/>
    </location>
</feature>
<feature type="modified residue" description="Phosphotyrosine" evidence="2">
    <location>
        <position position="17"/>
    </location>
</feature>
<feature type="modified residue" description="N6-acetyllysine" evidence="3">
    <location>
        <position position="190"/>
    </location>
</feature>
<feature type="modified residue" description="Phosphotyrosine" evidence="3">
    <location>
        <position position="211"/>
    </location>
</feature>
<feature type="modified residue" description="Phosphoserine" evidence="3">
    <location>
        <position position="218"/>
    </location>
</feature>
<keyword id="KW-0007">Acetylation</keyword>
<keyword id="KW-0131">Cell cycle</keyword>
<keyword id="KW-0132">Cell division</keyword>
<keyword id="KW-1003">Cell membrane</keyword>
<keyword id="KW-0966">Cell projection</keyword>
<keyword id="KW-0137">Centromere</keyword>
<keyword id="KW-0158">Chromosome</keyword>
<keyword id="KW-0969">Cilium</keyword>
<keyword id="KW-0963">Cytoplasm</keyword>
<keyword id="KW-0206">Cytoskeleton</keyword>
<keyword id="KW-0221">Differentiation</keyword>
<keyword id="KW-0282">Flagellum</keyword>
<keyword id="KW-0342">GTP-binding</keyword>
<keyword id="KW-0995">Kinetochore</keyword>
<keyword id="KW-0472">Membrane</keyword>
<keyword id="KW-0498">Mitosis</keyword>
<keyword id="KW-0547">Nucleotide-binding</keyword>
<keyword id="KW-0597">Phosphoprotein</keyword>
<keyword id="KW-1185">Reference proteome</keyword>
<keyword id="KW-0744">Spermatogenesis</keyword>
<protein>
    <recommendedName>
        <fullName>Septin-2</fullName>
    </recommendedName>
</protein>
<dbReference type="EMBL" id="BC111361">
    <property type="protein sequence ID" value="AAI11362.1"/>
    <property type="molecule type" value="mRNA"/>
</dbReference>
<dbReference type="RefSeq" id="NP_001039557.1">
    <property type="nucleotide sequence ID" value="NM_001046092.2"/>
</dbReference>
<dbReference type="RefSeq" id="XP_059739366.1">
    <property type="nucleotide sequence ID" value="XM_059883383.1"/>
</dbReference>
<dbReference type="RefSeq" id="XP_059739368.1">
    <property type="nucleotide sequence ID" value="XM_059883385.1"/>
</dbReference>
<dbReference type="SMR" id="Q2NKY7"/>
<dbReference type="FunCoup" id="Q2NKY7">
    <property type="interactions" value="3524"/>
</dbReference>
<dbReference type="STRING" id="9913.ENSBTAP00000043669"/>
<dbReference type="PaxDb" id="9913-ENSBTAP00000043669"/>
<dbReference type="PeptideAtlas" id="Q2NKY7"/>
<dbReference type="Ensembl" id="ENSBTAT00000046362.5">
    <property type="protein sequence ID" value="ENSBTAP00000043669.4"/>
    <property type="gene ID" value="ENSBTAG00000002608.7"/>
</dbReference>
<dbReference type="GeneID" id="511612"/>
<dbReference type="KEGG" id="bta:511612"/>
<dbReference type="CTD" id="4735"/>
<dbReference type="VEuPathDB" id="HostDB:ENSBTAG00000002608"/>
<dbReference type="VGNC" id="VGNC:34454">
    <property type="gene designation" value="SEPTIN2"/>
</dbReference>
<dbReference type="eggNOG" id="KOG2655">
    <property type="taxonomic scope" value="Eukaryota"/>
</dbReference>
<dbReference type="GeneTree" id="ENSGT00940000155098"/>
<dbReference type="InParanoid" id="Q2NKY7"/>
<dbReference type="OMA" id="EASHAEI"/>
<dbReference type="OrthoDB" id="416553at2759"/>
<dbReference type="Reactome" id="R-BTA-5620912">
    <property type="pathway name" value="Anchoring of the basal body to the plasma membrane"/>
</dbReference>
<dbReference type="CD-CODE" id="D7FE2080">
    <property type="entry name" value="Nucleolus"/>
</dbReference>
<dbReference type="Proteomes" id="UP000009136">
    <property type="component" value="Chromosome 3"/>
</dbReference>
<dbReference type="Bgee" id="ENSBTAG00000002608">
    <property type="expression patterns" value="Expressed in myometrium and 105 other cell types or tissues"/>
</dbReference>
<dbReference type="GO" id="GO:0032153">
    <property type="term" value="C:cell division site"/>
    <property type="evidence" value="ECO:0000318"/>
    <property type="project" value="GO_Central"/>
</dbReference>
<dbReference type="GO" id="GO:0060170">
    <property type="term" value="C:ciliary membrane"/>
    <property type="evidence" value="ECO:0000250"/>
    <property type="project" value="UniProtKB"/>
</dbReference>
<dbReference type="GO" id="GO:0032154">
    <property type="term" value="C:cleavage furrow"/>
    <property type="evidence" value="ECO:0007669"/>
    <property type="project" value="UniProtKB-SubCell"/>
</dbReference>
<dbReference type="GO" id="GO:0005737">
    <property type="term" value="C:cytoplasm"/>
    <property type="evidence" value="ECO:0000250"/>
    <property type="project" value="UniProtKB"/>
</dbReference>
<dbReference type="GO" id="GO:0000776">
    <property type="term" value="C:kinetochore"/>
    <property type="evidence" value="ECO:0007669"/>
    <property type="project" value="UniProtKB-KW"/>
</dbReference>
<dbReference type="GO" id="GO:0015630">
    <property type="term" value="C:microtubule cytoskeleton"/>
    <property type="evidence" value="ECO:0000318"/>
    <property type="project" value="GO_Central"/>
</dbReference>
<dbReference type="GO" id="GO:0030496">
    <property type="term" value="C:midbody"/>
    <property type="evidence" value="ECO:0007669"/>
    <property type="project" value="UniProtKB-SubCell"/>
</dbReference>
<dbReference type="GO" id="GO:0031514">
    <property type="term" value="C:motile cilium"/>
    <property type="evidence" value="ECO:0007669"/>
    <property type="project" value="UniProtKB-SubCell"/>
</dbReference>
<dbReference type="GO" id="GO:0031105">
    <property type="term" value="C:septin complex"/>
    <property type="evidence" value="ECO:0000318"/>
    <property type="project" value="GO_Central"/>
</dbReference>
<dbReference type="GO" id="GO:0005940">
    <property type="term" value="C:septin ring"/>
    <property type="evidence" value="ECO:0000318"/>
    <property type="project" value="GO_Central"/>
</dbReference>
<dbReference type="GO" id="GO:0005819">
    <property type="term" value="C:spindle"/>
    <property type="evidence" value="ECO:0007669"/>
    <property type="project" value="UniProtKB-SubCell"/>
</dbReference>
<dbReference type="GO" id="GO:0005525">
    <property type="term" value="F:GTP binding"/>
    <property type="evidence" value="ECO:0007669"/>
    <property type="project" value="UniProtKB-KW"/>
</dbReference>
<dbReference type="GO" id="GO:0003924">
    <property type="term" value="F:GTPase activity"/>
    <property type="evidence" value="ECO:0000318"/>
    <property type="project" value="GO_Central"/>
</dbReference>
<dbReference type="GO" id="GO:0060090">
    <property type="term" value="F:molecular adaptor activity"/>
    <property type="evidence" value="ECO:0000318"/>
    <property type="project" value="GO_Central"/>
</dbReference>
<dbReference type="GO" id="GO:0030154">
    <property type="term" value="P:cell differentiation"/>
    <property type="evidence" value="ECO:0007669"/>
    <property type="project" value="UniProtKB-KW"/>
</dbReference>
<dbReference type="GO" id="GO:0060271">
    <property type="term" value="P:cilium assembly"/>
    <property type="evidence" value="ECO:0000250"/>
    <property type="project" value="UniProtKB"/>
</dbReference>
<dbReference type="GO" id="GO:0061640">
    <property type="term" value="P:cytoskeleton-dependent cytokinesis"/>
    <property type="evidence" value="ECO:0000318"/>
    <property type="project" value="GO_Central"/>
</dbReference>
<dbReference type="GO" id="GO:0008104">
    <property type="term" value="P:protein localization"/>
    <property type="evidence" value="ECO:0000318"/>
    <property type="project" value="GO_Central"/>
</dbReference>
<dbReference type="GO" id="GO:0007224">
    <property type="term" value="P:smoothened signaling pathway"/>
    <property type="evidence" value="ECO:0000250"/>
    <property type="project" value="UniProtKB"/>
</dbReference>
<dbReference type="GO" id="GO:0007283">
    <property type="term" value="P:spermatogenesis"/>
    <property type="evidence" value="ECO:0007669"/>
    <property type="project" value="UniProtKB-KW"/>
</dbReference>
<dbReference type="CDD" id="cd01850">
    <property type="entry name" value="CDC_Septin"/>
    <property type="match status" value="1"/>
</dbReference>
<dbReference type="FunFam" id="3.40.50.300:FF:000064">
    <property type="entry name" value="Septin 4"/>
    <property type="match status" value="1"/>
</dbReference>
<dbReference type="Gene3D" id="3.40.50.300">
    <property type="entry name" value="P-loop containing nucleotide triphosphate hydrolases"/>
    <property type="match status" value="1"/>
</dbReference>
<dbReference type="InterPro" id="IPR030379">
    <property type="entry name" value="G_SEPTIN_dom"/>
</dbReference>
<dbReference type="InterPro" id="IPR027417">
    <property type="entry name" value="P-loop_NTPase"/>
</dbReference>
<dbReference type="InterPro" id="IPR016491">
    <property type="entry name" value="Septin"/>
</dbReference>
<dbReference type="InterPro" id="IPR008113">
    <property type="entry name" value="Septin2"/>
</dbReference>
<dbReference type="PANTHER" id="PTHR18884">
    <property type="entry name" value="SEPTIN"/>
    <property type="match status" value="1"/>
</dbReference>
<dbReference type="Pfam" id="PF00735">
    <property type="entry name" value="Septin"/>
    <property type="match status" value="1"/>
</dbReference>
<dbReference type="PIRSF" id="PIRSF006698">
    <property type="entry name" value="Septin"/>
    <property type="match status" value="1"/>
</dbReference>
<dbReference type="PRINTS" id="PR01740">
    <property type="entry name" value="SEPTIN2"/>
</dbReference>
<dbReference type="SUPFAM" id="SSF52540">
    <property type="entry name" value="P-loop containing nucleoside triphosphate hydrolases"/>
    <property type="match status" value="1"/>
</dbReference>
<dbReference type="PROSITE" id="PS51719">
    <property type="entry name" value="G_SEPTIN"/>
    <property type="match status" value="1"/>
</dbReference>
<sequence>MSKQQQTQFINPETPGYVGFANLPNQVHRKSVKKGFEFTLMVVGESGLGKSTLINSLFLTDLYPERVIPGAAEKIERTVQIEASTVEIEERGVKLRLTVVDTPGYGDAINCRDCFKTIICYIDEQFERYLHDESGLNRRHIIDNRVHCCFYFISPFGHGLKPLDVAFMKAIHNKVNIVPVIAKADTLTLKERERLKKRILDEIEEHNIKIYHLPDAESDEDEDFKEQTRLLKASIPFSVVGSNQLIEAKGKKVRGRLYPWGVVEVENPEHNDFLKLRTMLITHMQDLQEVTQDLHYENFRSERLKRGGRKVENEDMNKDQILLEKEAELRRMQEMIARMQAQMQLQLQGGDGDSGVHGQHV</sequence>
<proteinExistence type="evidence at transcript level"/>
<reference key="1">
    <citation type="submission" date="2005-12" db="EMBL/GenBank/DDBJ databases">
        <authorList>
            <consortium name="NIH - Mammalian Gene Collection (MGC) project"/>
        </authorList>
    </citation>
    <scope>NUCLEOTIDE SEQUENCE [LARGE SCALE MRNA]</scope>
    <source>
        <strain>Crossbred X Angus</strain>
        <tissue>Liver</tissue>
    </source>
</reference>
<organism>
    <name type="scientific">Bos taurus</name>
    <name type="common">Bovine</name>
    <dbReference type="NCBI Taxonomy" id="9913"/>
    <lineage>
        <taxon>Eukaryota</taxon>
        <taxon>Metazoa</taxon>
        <taxon>Chordata</taxon>
        <taxon>Craniata</taxon>
        <taxon>Vertebrata</taxon>
        <taxon>Euteleostomi</taxon>
        <taxon>Mammalia</taxon>
        <taxon>Eutheria</taxon>
        <taxon>Laurasiatheria</taxon>
        <taxon>Artiodactyla</taxon>
        <taxon>Ruminantia</taxon>
        <taxon>Pecora</taxon>
        <taxon>Bovidae</taxon>
        <taxon>Bovinae</taxon>
        <taxon>Bos</taxon>
    </lineage>
</organism>
<accession>Q2NKY7</accession>
<name>SEPT2_BOVIN</name>